<reference key="1">
    <citation type="journal article" date="2007" name="J. Bacteriol.">
        <title>Whole-genome analysis of the methyl tert-butyl ether-degrading beta-proteobacterium Methylibium petroleiphilum PM1.</title>
        <authorList>
            <person name="Kane S.R."/>
            <person name="Chakicherla A.Y."/>
            <person name="Chain P.S.G."/>
            <person name="Schmidt R."/>
            <person name="Shin M.W."/>
            <person name="Legler T.C."/>
            <person name="Scow K.M."/>
            <person name="Larimer F.W."/>
            <person name="Lucas S.M."/>
            <person name="Richardson P.M."/>
            <person name="Hristova K.R."/>
        </authorList>
    </citation>
    <scope>NUCLEOTIDE SEQUENCE [LARGE SCALE GENOMIC DNA]</scope>
    <source>
        <strain>ATCC BAA-1232 / LMG 22953 / PM1</strain>
    </source>
</reference>
<dbReference type="EC" id="2.3.1.181" evidence="1"/>
<dbReference type="EMBL" id="CP000555">
    <property type="protein sequence ID" value="ABM93277.1"/>
    <property type="molecule type" value="Genomic_DNA"/>
</dbReference>
<dbReference type="RefSeq" id="WP_011827916.1">
    <property type="nucleotide sequence ID" value="NC_008825.1"/>
</dbReference>
<dbReference type="SMR" id="A2SCI8"/>
<dbReference type="STRING" id="420662.Mpe_A0315"/>
<dbReference type="KEGG" id="mpt:Mpe_A0315"/>
<dbReference type="eggNOG" id="COG0321">
    <property type="taxonomic scope" value="Bacteria"/>
</dbReference>
<dbReference type="HOGENOM" id="CLU_035168_3_1_4"/>
<dbReference type="UniPathway" id="UPA00538">
    <property type="reaction ID" value="UER00592"/>
</dbReference>
<dbReference type="Proteomes" id="UP000000366">
    <property type="component" value="Chromosome"/>
</dbReference>
<dbReference type="GO" id="GO:0005737">
    <property type="term" value="C:cytoplasm"/>
    <property type="evidence" value="ECO:0007669"/>
    <property type="project" value="UniProtKB-SubCell"/>
</dbReference>
<dbReference type="GO" id="GO:0033819">
    <property type="term" value="F:lipoyl(octanoyl) transferase activity"/>
    <property type="evidence" value="ECO:0007669"/>
    <property type="project" value="UniProtKB-EC"/>
</dbReference>
<dbReference type="GO" id="GO:0036211">
    <property type="term" value="P:protein modification process"/>
    <property type="evidence" value="ECO:0007669"/>
    <property type="project" value="InterPro"/>
</dbReference>
<dbReference type="CDD" id="cd16444">
    <property type="entry name" value="LipB"/>
    <property type="match status" value="1"/>
</dbReference>
<dbReference type="Gene3D" id="3.30.930.10">
    <property type="entry name" value="Bira Bifunctional Protein, Domain 2"/>
    <property type="match status" value="1"/>
</dbReference>
<dbReference type="HAMAP" id="MF_00013">
    <property type="entry name" value="LipB"/>
    <property type="match status" value="1"/>
</dbReference>
<dbReference type="InterPro" id="IPR045864">
    <property type="entry name" value="aa-tRNA-synth_II/BPL/LPL"/>
</dbReference>
<dbReference type="InterPro" id="IPR004143">
    <property type="entry name" value="BPL_LPL_catalytic"/>
</dbReference>
<dbReference type="InterPro" id="IPR000544">
    <property type="entry name" value="Octanoyltransferase"/>
</dbReference>
<dbReference type="InterPro" id="IPR020605">
    <property type="entry name" value="Octanoyltransferase_CS"/>
</dbReference>
<dbReference type="NCBIfam" id="TIGR00214">
    <property type="entry name" value="lipB"/>
    <property type="match status" value="1"/>
</dbReference>
<dbReference type="NCBIfam" id="NF010922">
    <property type="entry name" value="PRK14342.1"/>
    <property type="match status" value="1"/>
</dbReference>
<dbReference type="PANTHER" id="PTHR10993:SF7">
    <property type="entry name" value="LIPOYLTRANSFERASE 2, MITOCHONDRIAL-RELATED"/>
    <property type="match status" value="1"/>
</dbReference>
<dbReference type="PANTHER" id="PTHR10993">
    <property type="entry name" value="OCTANOYLTRANSFERASE"/>
    <property type="match status" value="1"/>
</dbReference>
<dbReference type="Pfam" id="PF21948">
    <property type="entry name" value="LplA-B_cat"/>
    <property type="match status" value="1"/>
</dbReference>
<dbReference type="PIRSF" id="PIRSF016262">
    <property type="entry name" value="LPLase"/>
    <property type="match status" value="1"/>
</dbReference>
<dbReference type="SUPFAM" id="SSF55681">
    <property type="entry name" value="Class II aaRS and biotin synthetases"/>
    <property type="match status" value="1"/>
</dbReference>
<dbReference type="PROSITE" id="PS51733">
    <property type="entry name" value="BPL_LPL_CATALYTIC"/>
    <property type="match status" value="1"/>
</dbReference>
<dbReference type="PROSITE" id="PS01313">
    <property type="entry name" value="LIPB"/>
    <property type="match status" value="1"/>
</dbReference>
<proteinExistence type="inferred from homology"/>
<name>LIPB_METPP</name>
<sequence length="224" mass="24207">MAMQRRRLGRVDYATTFDAMRAFTETRTPGTPDELWLCEHPPVFTQGLAGKAEHVLDAGDIPVVASNRGGQVTYHGPGQVVAYPLIDLQALGIFVKEYVFRLEQAVIKTLEGYGVTGHRVTGAPGIYVNLCDPFGHGALPGPPDPRDPWRGIGKIAALGIKVSRHCSYHGLALNVAMDLSPYERINPCGYAGLRTVDLSTIGVPVDPERAAADLGDRLESYLSP</sequence>
<organism>
    <name type="scientific">Methylibium petroleiphilum (strain ATCC BAA-1232 / LMG 22953 / PM1)</name>
    <dbReference type="NCBI Taxonomy" id="420662"/>
    <lineage>
        <taxon>Bacteria</taxon>
        <taxon>Pseudomonadati</taxon>
        <taxon>Pseudomonadota</taxon>
        <taxon>Betaproteobacteria</taxon>
        <taxon>Burkholderiales</taxon>
        <taxon>Sphaerotilaceae</taxon>
        <taxon>Methylibium</taxon>
    </lineage>
</organism>
<protein>
    <recommendedName>
        <fullName evidence="1">Octanoyltransferase</fullName>
        <ecNumber evidence="1">2.3.1.181</ecNumber>
    </recommendedName>
    <alternativeName>
        <fullName evidence="1">Lipoate-protein ligase B</fullName>
    </alternativeName>
    <alternativeName>
        <fullName evidence="1">Lipoyl/octanoyl transferase</fullName>
    </alternativeName>
    <alternativeName>
        <fullName evidence="1">Octanoyl-[acyl-carrier-protein]-protein N-octanoyltransferase</fullName>
    </alternativeName>
</protein>
<gene>
    <name evidence="1" type="primary">lipB</name>
    <name type="ordered locus">Mpe_A0315</name>
</gene>
<evidence type="ECO:0000255" key="1">
    <source>
        <dbReference type="HAMAP-Rule" id="MF_00013"/>
    </source>
</evidence>
<evidence type="ECO:0000255" key="2">
    <source>
        <dbReference type="PROSITE-ProRule" id="PRU01067"/>
    </source>
</evidence>
<feature type="chain" id="PRO_0000321646" description="Octanoyltransferase">
    <location>
        <begin position="1"/>
        <end position="224"/>
    </location>
</feature>
<feature type="domain" description="BPL/LPL catalytic" evidence="2">
    <location>
        <begin position="29"/>
        <end position="224"/>
    </location>
</feature>
<feature type="active site" description="Acyl-thioester intermediate" evidence="1">
    <location>
        <position position="188"/>
    </location>
</feature>
<feature type="binding site" evidence="1">
    <location>
        <begin position="68"/>
        <end position="75"/>
    </location>
    <ligand>
        <name>substrate</name>
    </ligand>
</feature>
<feature type="binding site" evidence="1">
    <location>
        <begin position="157"/>
        <end position="159"/>
    </location>
    <ligand>
        <name>substrate</name>
    </ligand>
</feature>
<feature type="binding site" evidence="1">
    <location>
        <begin position="170"/>
        <end position="172"/>
    </location>
    <ligand>
        <name>substrate</name>
    </ligand>
</feature>
<feature type="site" description="Lowers pKa of active site Cys" evidence="1">
    <location>
        <position position="154"/>
    </location>
</feature>
<accession>A2SCI8</accession>
<keyword id="KW-0012">Acyltransferase</keyword>
<keyword id="KW-0963">Cytoplasm</keyword>
<keyword id="KW-1185">Reference proteome</keyword>
<keyword id="KW-0808">Transferase</keyword>
<comment type="function">
    <text evidence="1">Catalyzes the transfer of endogenously produced octanoic acid from octanoyl-acyl-carrier-protein onto the lipoyl domains of lipoate-dependent enzymes. Lipoyl-ACP can also act as a substrate although octanoyl-ACP is likely to be the physiological substrate.</text>
</comment>
<comment type="catalytic activity">
    <reaction evidence="1">
        <text>octanoyl-[ACP] + L-lysyl-[protein] = N(6)-octanoyl-L-lysyl-[protein] + holo-[ACP] + H(+)</text>
        <dbReference type="Rhea" id="RHEA:17665"/>
        <dbReference type="Rhea" id="RHEA-COMP:9636"/>
        <dbReference type="Rhea" id="RHEA-COMP:9685"/>
        <dbReference type="Rhea" id="RHEA-COMP:9752"/>
        <dbReference type="Rhea" id="RHEA-COMP:9928"/>
        <dbReference type="ChEBI" id="CHEBI:15378"/>
        <dbReference type="ChEBI" id="CHEBI:29969"/>
        <dbReference type="ChEBI" id="CHEBI:64479"/>
        <dbReference type="ChEBI" id="CHEBI:78463"/>
        <dbReference type="ChEBI" id="CHEBI:78809"/>
        <dbReference type="EC" id="2.3.1.181"/>
    </reaction>
</comment>
<comment type="pathway">
    <text evidence="1">Protein modification; protein lipoylation via endogenous pathway; protein N(6)-(lipoyl)lysine from octanoyl-[acyl-carrier-protein]: step 1/2.</text>
</comment>
<comment type="subcellular location">
    <subcellularLocation>
        <location evidence="1">Cytoplasm</location>
    </subcellularLocation>
</comment>
<comment type="miscellaneous">
    <text evidence="1">In the reaction, the free carboxyl group of octanoic acid is attached via an amide linkage to the epsilon-amino group of a specific lysine residue of lipoyl domains of lipoate-dependent enzymes.</text>
</comment>
<comment type="similarity">
    <text evidence="1">Belongs to the LipB family.</text>
</comment>